<name>NU3C_PANGI</name>
<feature type="chain" id="PRO_0000362862" description="NAD(P)H-quinone oxidoreductase subunit 3, chloroplastic">
    <location>
        <begin position="1"/>
        <end position="120"/>
    </location>
</feature>
<feature type="transmembrane region" description="Helical" evidence="1">
    <location>
        <begin position="9"/>
        <end position="29"/>
    </location>
</feature>
<feature type="transmembrane region" description="Helical" evidence="1">
    <location>
        <begin position="64"/>
        <end position="84"/>
    </location>
</feature>
<feature type="transmembrane region" description="Helical" evidence="1">
    <location>
        <begin position="88"/>
        <end position="108"/>
    </location>
</feature>
<keyword id="KW-0150">Chloroplast</keyword>
<keyword id="KW-0472">Membrane</keyword>
<keyword id="KW-0520">NAD</keyword>
<keyword id="KW-0521">NADP</keyword>
<keyword id="KW-0934">Plastid</keyword>
<keyword id="KW-0618">Plastoquinone</keyword>
<keyword id="KW-0874">Quinone</keyword>
<keyword id="KW-0793">Thylakoid</keyword>
<keyword id="KW-1278">Translocase</keyword>
<keyword id="KW-0812">Transmembrane</keyword>
<keyword id="KW-1133">Transmembrane helix</keyword>
<keyword id="KW-0813">Transport</keyword>
<protein>
    <recommendedName>
        <fullName evidence="1">NAD(P)H-quinone oxidoreductase subunit 3, chloroplastic</fullName>
        <ecNumber evidence="1">7.1.1.-</ecNumber>
    </recommendedName>
    <alternativeName>
        <fullName evidence="1">NAD(P)H dehydrogenase subunit 3</fullName>
    </alternativeName>
    <alternativeName>
        <fullName evidence="1">NADH-plastoquinone oxidoreductase subunit 3</fullName>
    </alternativeName>
</protein>
<reference key="1">
    <citation type="journal article" date="2004" name="DNA Res.">
        <title>Complete chloroplast genome sequence from Korea ginseng (Panax schinseng Nees) and comparative analysis of sequence evolution among 17 vascular plants.</title>
        <authorList>
            <person name="Kim K.-J."/>
            <person name="Lee H.-L."/>
        </authorList>
    </citation>
    <scope>NUCLEOTIDE SEQUENCE [LARGE SCALE GENOMIC DNA]</scope>
</reference>
<evidence type="ECO:0000255" key="1">
    <source>
        <dbReference type="HAMAP-Rule" id="MF_01394"/>
    </source>
</evidence>
<proteinExistence type="inferred from homology"/>
<accession>Q68S01</accession>
<geneLocation type="chloroplast"/>
<gene>
    <name evidence="1" type="primary">ndhC</name>
    <name type="ORF">PSC0521</name>
</gene>
<comment type="function">
    <text evidence="1">NDH shuttles electrons from NAD(P)H:plastoquinone, via FMN and iron-sulfur (Fe-S) centers, to quinones in the photosynthetic chain and possibly in a chloroplast respiratory chain. The immediate electron acceptor for the enzyme in this species is believed to be plastoquinone. Couples the redox reaction to proton translocation, and thus conserves the redox energy in a proton gradient.</text>
</comment>
<comment type="catalytic activity">
    <reaction evidence="1">
        <text>a plastoquinone + NADH + (n+1) H(+)(in) = a plastoquinol + NAD(+) + n H(+)(out)</text>
        <dbReference type="Rhea" id="RHEA:42608"/>
        <dbReference type="Rhea" id="RHEA-COMP:9561"/>
        <dbReference type="Rhea" id="RHEA-COMP:9562"/>
        <dbReference type="ChEBI" id="CHEBI:15378"/>
        <dbReference type="ChEBI" id="CHEBI:17757"/>
        <dbReference type="ChEBI" id="CHEBI:57540"/>
        <dbReference type="ChEBI" id="CHEBI:57945"/>
        <dbReference type="ChEBI" id="CHEBI:62192"/>
    </reaction>
</comment>
<comment type="catalytic activity">
    <reaction evidence="1">
        <text>a plastoquinone + NADPH + (n+1) H(+)(in) = a plastoquinol + NADP(+) + n H(+)(out)</text>
        <dbReference type="Rhea" id="RHEA:42612"/>
        <dbReference type="Rhea" id="RHEA-COMP:9561"/>
        <dbReference type="Rhea" id="RHEA-COMP:9562"/>
        <dbReference type="ChEBI" id="CHEBI:15378"/>
        <dbReference type="ChEBI" id="CHEBI:17757"/>
        <dbReference type="ChEBI" id="CHEBI:57783"/>
        <dbReference type="ChEBI" id="CHEBI:58349"/>
        <dbReference type="ChEBI" id="CHEBI:62192"/>
    </reaction>
</comment>
<comment type="subunit">
    <text evidence="1">NDH is composed of at least 16 different subunits, 5 of which are encoded in the nucleus.</text>
</comment>
<comment type="subcellular location">
    <subcellularLocation>
        <location evidence="1">Plastid</location>
        <location evidence="1">Chloroplast thylakoid membrane</location>
        <topology evidence="1">Multi-pass membrane protein</topology>
    </subcellularLocation>
</comment>
<comment type="similarity">
    <text evidence="1">Belongs to the complex I subunit 3 family.</text>
</comment>
<dbReference type="EC" id="7.1.1.-" evidence="1"/>
<dbReference type="EMBL" id="AY582139">
    <property type="protein sequence ID" value="AAT98514.1"/>
    <property type="molecule type" value="Genomic_DNA"/>
</dbReference>
<dbReference type="RefSeq" id="YP_086971.1">
    <property type="nucleotide sequence ID" value="NC_006290.1"/>
</dbReference>
<dbReference type="SMR" id="Q68S01"/>
<dbReference type="GeneID" id="3021504"/>
<dbReference type="GO" id="GO:0009535">
    <property type="term" value="C:chloroplast thylakoid membrane"/>
    <property type="evidence" value="ECO:0007669"/>
    <property type="project" value="UniProtKB-SubCell"/>
</dbReference>
<dbReference type="GO" id="GO:0030964">
    <property type="term" value="C:NADH dehydrogenase complex"/>
    <property type="evidence" value="ECO:0007669"/>
    <property type="project" value="TreeGrafter"/>
</dbReference>
<dbReference type="GO" id="GO:0008137">
    <property type="term" value="F:NADH dehydrogenase (ubiquinone) activity"/>
    <property type="evidence" value="ECO:0007669"/>
    <property type="project" value="InterPro"/>
</dbReference>
<dbReference type="GO" id="GO:0048038">
    <property type="term" value="F:quinone binding"/>
    <property type="evidence" value="ECO:0007669"/>
    <property type="project" value="UniProtKB-KW"/>
</dbReference>
<dbReference type="GO" id="GO:0019684">
    <property type="term" value="P:photosynthesis, light reaction"/>
    <property type="evidence" value="ECO:0007669"/>
    <property type="project" value="UniProtKB-UniRule"/>
</dbReference>
<dbReference type="FunFam" id="1.20.58.1610:FF:000001">
    <property type="entry name" value="NAD(P)H-quinone oxidoreductase subunit 3, chloroplastic"/>
    <property type="match status" value="1"/>
</dbReference>
<dbReference type="Gene3D" id="1.20.58.1610">
    <property type="entry name" value="NADH:ubiquinone/plastoquinone oxidoreductase, chain 3"/>
    <property type="match status" value="1"/>
</dbReference>
<dbReference type="HAMAP" id="MF_01394">
    <property type="entry name" value="NDH1_NuoA"/>
    <property type="match status" value="1"/>
</dbReference>
<dbReference type="InterPro" id="IPR023043">
    <property type="entry name" value="NAD(P)H_OxRDtase_bac/plastid"/>
</dbReference>
<dbReference type="InterPro" id="IPR000440">
    <property type="entry name" value="NADH_UbQ/plastoQ_OxRdtase_su3"/>
</dbReference>
<dbReference type="InterPro" id="IPR038430">
    <property type="entry name" value="NDAH_ubi_oxred_su3_sf"/>
</dbReference>
<dbReference type="PANTHER" id="PTHR11058">
    <property type="entry name" value="NADH-UBIQUINONE OXIDOREDUCTASE CHAIN 3"/>
    <property type="match status" value="1"/>
</dbReference>
<dbReference type="PANTHER" id="PTHR11058:SF9">
    <property type="entry name" value="NADH-UBIQUINONE OXIDOREDUCTASE CHAIN 3"/>
    <property type="match status" value="1"/>
</dbReference>
<dbReference type="Pfam" id="PF00507">
    <property type="entry name" value="Oxidored_q4"/>
    <property type="match status" value="1"/>
</dbReference>
<organism>
    <name type="scientific">Panax ginseng</name>
    <name type="common">Korean ginseng</name>
    <dbReference type="NCBI Taxonomy" id="4054"/>
    <lineage>
        <taxon>Eukaryota</taxon>
        <taxon>Viridiplantae</taxon>
        <taxon>Streptophyta</taxon>
        <taxon>Embryophyta</taxon>
        <taxon>Tracheophyta</taxon>
        <taxon>Spermatophyta</taxon>
        <taxon>Magnoliopsida</taxon>
        <taxon>eudicotyledons</taxon>
        <taxon>Gunneridae</taxon>
        <taxon>Pentapetalae</taxon>
        <taxon>asterids</taxon>
        <taxon>campanulids</taxon>
        <taxon>Apiales</taxon>
        <taxon>Araliaceae</taxon>
        <taxon>Panax</taxon>
    </lineage>
</organism>
<sequence>MFLLYEYDIFWAFLIISSLIPILAFFISGVLAPISKGPEKLSSYESGIEPMGNAWLQFRIRYYMFALVFVVFDVETVFLYPWAMSFDVLGVSVFIEALIFVLILIVGLVYAWRKGALEWS</sequence>